<dbReference type="EC" id="2.7.7.6" evidence="1"/>
<dbReference type="EMBL" id="CP000246">
    <property type="protein sequence ID" value="ABG83531.1"/>
    <property type="molecule type" value="Genomic_DNA"/>
</dbReference>
<dbReference type="RefSeq" id="WP_003449449.1">
    <property type="nucleotide sequence ID" value="NC_008261.1"/>
</dbReference>
<dbReference type="SMR" id="Q0TPK7"/>
<dbReference type="STRING" id="195103.CPF_2000"/>
<dbReference type="PaxDb" id="195103-CPF_2000"/>
<dbReference type="GeneID" id="93001716"/>
<dbReference type="KEGG" id="cpf:CPF_2000"/>
<dbReference type="eggNOG" id="COG1758">
    <property type="taxonomic scope" value="Bacteria"/>
</dbReference>
<dbReference type="HOGENOM" id="CLU_125406_6_1_9"/>
<dbReference type="Proteomes" id="UP000001823">
    <property type="component" value="Chromosome"/>
</dbReference>
<dbReference type="GO" id="GO:0000428">
    <property type="term" value="C:DNA-directed RNA polymerase complex"/>
    <property type="evidence" value="ECO:0007669"/>
    <property type="project" value="UniProtKB-KW"/>
</dbReference>
<dbReference type="GO" id="GO:0003677">
    <property type="term" value="F:DNA binding"/>
    <property type="evidence" value="ECO:0007669"/>
    <property type="project" value="UniProtKB-UniRule"/>
</dbReference>
<dbReference type="GO" id="GO:0003899">
    <property type="term" value="F:DNA-directed RNA polymerase activity"/>
    <property type="evidence" value="ECO:0007669"/>
    <property type="project" value="UniProtKB-UniRule"/>
</dbReference>
<dbReference type="GO" id="GO:0006351">
    <property type="term" value="P:DNA-templated transcription"/>
    <property type="evidence" value="ECO:0007669"/>
    <property type="project" value="UniProtKB-UniRule"/>
</dbReference>
<dbReference type="Gene3D" id="3.90.940.10">
    <property type="match status" value="1"/>
</dbReference>
<dbReference type="HAMAP" id="MF_00366">
    <property type="entry name" value="RNApol_bact_RpoZ"/>
    <property type="match status" value="1"/>
</dbReference>
<dbReference type="InterPro" id="IPR003716">
    <property type="entry name" value="DNA-dir_RNA_pol_omega"/>
</dbReference>
<dbReference type="InterPro" id="IPR006110">
    <property type="entry name" value="Pol_omega/Rpo6/RPB6"/>
</dbReference>
<dbReference type="InterPro" id="IPR036161">
    <property type="entry name" value="RPB6/omega-like_sf"/>
</dbReference>
<dbReference type="NCBIfam" id="TIGR00690">
    <property type="entry name" value="rpoZ"/>
    <property type="match status" value="1"/>
</dbReference>
<dbReference type="PANTHER" id="PTHR34476">
    <property type="entry name" value="DNA-DIRECTED RNA POLYMERASE SUBUNIT OMEGA"/>
    <property type="match status" value="1"/>
</dbReference>
<dbReference type="PANTHER" id="PTHR34476:SF1">
    <property type="entry name" value="DNA-DIRECTED RNA POLYMERASE SUBUNIT OMEGA"/>
    <property type="match status" value="1"/>
</dbReference>
<dbReference type="Pfam" id="PF01192">
    <property type="entry name" value="RNA_pol_Rpb6"/>
    <property type="match status" value="1"/>
</dbReference>
<dbReference type="SMART" id="SM01409">
    <property type="entry name" value="RNA_pol_Rpb6"/>
    <property type="match status" value="1"/>
</dbReference>
<dbReference type="SUPFAM" id="SSF63562">
    <property type="entry name" value="RPB6/omega subunit-like"/>
    <property type="match status" value="1"/>
</dbReference>
<feature type="chain" id="PRO_1000005916" description="DNA-directed RNA polymerase subunit omega">
    <location>
        <begin position="1"/>
        <end position="70"/>
    </location>
</feature>
<name>RPOZ_CLOP1</name>
<sequence length="70" mass="7971">MNNSMINPSIVDLLKRVEDRYSLVILSAKRARQIIDGAETFVDVESNKPLTIAINEIDEGFVNYKDTEEK</sequence>
<evidence type="ECO:0000255" key="1">
    <source>
        <dbReference type="HAMAP-Rule" id="MF_00366"/>
    </source>
</evidence>
<comment type="function">
    <text evidence="1">Promotes RNA polymerase assembly. Latches the N- and C-terminal regions of the beta' subunit thereby facilitating its interaction with the beta and alpha subunits.</text>
</comment>
<comment type="catalytic activity">
    <reaction evidence="1">
        <text>RNA(n) + a ribonucleoside 5'-triphosphate = RNA(n+1) + diphosphate</text>
        <dbReference type="Rhea" id="RHEA:21248"/>
        <dbReference type="Rhea" id="RHEA-COMP:14527"/>
        <dbReference type="Rhea" id="RHEA-COMP:17342"/>
        <dbReference type="ChEBI" id="CHEBI:33019"/>
        <dbReference type="ChEBI" id="CHEBI:61557"/>
        <dbReference type="ChEBI" id="CHEBI:140395"/>
        <dbReference type="EC" id="2.7.7.6"/>
    </reaction>
</comment>
<comment type="subunit">
    <text evidence="1">The RNAP catalytic core consists of 2 alpha, 1 beta, 1 beta' and 1 omega subunit. When a sigma factor is associated with the core the holoenzyme is formed, which can initiate transcription.</text>
</comment>
<comment type="similarity">
    <text evidence="1">Belongs to the RNA polymerase subunit omega family.</text>
</comment>
<keyword id="KW-0240">DNA-directed RNA polymerase</keyword>
<keyword id="KW-0548">Nucleotidyltransferase</keyword>
<keyword id="KW-0804">Transcription</keyword>
<keyword id="KW-0808">Transferase</keyword>
<protein>
    <recommendedName>
        <fullName evidence="1">DNA-directed RNA polymerase subunit omega</fullName>
        <shortName evidence="1">RNAP omega subunit</shortName>
        <ecNumber evidence="1">2.7.7.6</ecNumber>
    </recommendedName>
    <alternativeName>
        <fullName evidence="1">RNA polymerase omega subunit</fullName>
    </alternativeName>
    <alternativeName>
        <fullName evidence="1">Transcriptase subunit omega</fullName>
    </alternativeName>
</protein>
<accession>Q0TPK7</accession>
<reference key="1">
    <citation type="journal article" date="2006" name="Genome Res.">
        <title>Skewed genomic variability in strains of the toxigenic bacterial pathogen, Clostridium perfringens.</title>
        <authorList>
            <person name="Myers G.S.A."/>
            <person name="Rasko D.A."/>
            <person name="Cheung J.K."/>
            <person name="Ravel J."/>
            <person name="Seshadri R."/>
            <person name="DeBoy R.T."/>
            <person name="Ren Q."/>
            <person name="Varga J."/>
            <person name="Awad M.M."/>
            <person name="Brinkac L.M."/>
            <person name="Daugherty S.C."/>
            <person name="Haft D.H."/>
            <person name="Dodson R.J."/>
            <person name="Madupu R."/>
            <person name="Nelson W.C."/>
            <person name="Rosovitz M.J."/>
            <person name="Sullivan S.A."/>
            <person name="Khouri H."/>
            <person name="Dimitrov G.I."/>
            <person name="Watkins K.L."/>
            <person name="Mulligan S."/>
            <person name="Benton J."/>
            <person name="Radune D."/>
            <person name="Fisher D.J."/>
            <person name="Atkins H.S."/>
            <person name="Hiscox T."/>
            <person name="Jost B.H."/>
            <person name="Billington S.J."/>
            <person name="Songer J.G."/>
            <person name="McClane B.A."/>
            <person name="Titball R.W."/>
            <person name="Rood J.I."/>
            <person name="Melville S.B."/>
            <person name="Paulsen I.T."/>
        </authorList>
    </citation>
    <scope>NUCLEOTIDE SEQUENCE [LARGE SCALE GENOMIC DNA]</scope>
    <source>
        <strain>ATCC 13124 / DSM 756 / JCM 1290 / NCIMB 6125 / NCTC 8237 / S 107 / Type A</strain>
    </source>
</reference>
<proteinExistence type="inferred from homology"/>
<gene>
    <name evidence="1" type="primary">rpoZ</name>
    <name type="ordered locus">CPF_2000</name>
</gene>
<organism>
    <name type="scientific">Clostridium perfringens (strain ATCC 13124 / DSM 756 / JCM 1290 / NCIMB 6125 / NCTC 8237 / Type A)</name>
    <dbReference type="NCBI Taxonomy" id="195103"/>
    <lineage>
        <taxon>Bacteria</taxon>
        <taxon>Bacillati</taxon>
        <taxon>Bacillota</taxon>
        <taxon>Clostridia</taxon>
        <taxon>Eubacteriales</taxon>
        <taxon>Clostridiaceae</taxon>
        <taxon>Clostridium</taxon>
    </lineage>
</organism>